<feature type="chain" id="PRO_0000459310" description="Intraflagellar transport protein 80">
    <location>
        <begin position="1"/>
        <end position="1079"/>
    </location>
</feature>
<feature type="region of interest" description="Disordered" evidence="1">
    <location>
        <begin position="495"/>
        <end position="514"/>
    </location>
</feature>
<feature type="compositionally biased region" description="Polar residues" evidence="1">
    <location>
        <begin position="501"/>
        <end position="514"/>
    </location>
</feature>
<accession>A8B9C5</accession>
<name>IFT80_GIAIC</name>
<reference evidence="5 7" key="1">
    <citation type="journal article" date="2007" name="Science">
        <title>Genomic minimalism in the early diverging intestinal parasite Giardia lamblia.</title>
        <authorList>
            <person name="Morrison H.G."/>
            <person name="McArthur A.G."/>
            <person name="Gillin F.D."/>
            <person name="Aley S.B."/>
            <person name="Adam R.D."/>
            <person name="Olsen G.J."/>
            <person name="Best A.A."/>
            <person name="Cande W.Z."/>
            <person name="Chen F."/>
            <person name="Cipriano M.J."/>
            <person name="Davids B.J."/>
            <person name="Dawson S.C."/>
            <person name="Elmendorf H.G."/>
            <person name="Hehl A.B."/>
            <person name="Holder M.E."/>
            <person name="Huse S.M."/>
            <person name="Kim U.U."/>
            <person name="Lasek-Nesselquist E."/>
            <person name="Manning G."/>
            <person name="Nigam A."/>
            <person name="Nixon J.E.J."/>
            <person name="Palm D."/>
            <person name="Passamaneck N.E."/>
            <person name="Prabhu A."/>
            <person name="Reich C.I."/>
            <person name="Reiner D.S."/>
            <person name="Samuelson J."/>
            <person name="Svard S.G."/>
            <person name="Sogin M.L."/>
        </authorList>
    </citation>
    <scope>NUCLEOTIDE SEQUENCE [LARGE SCALE GENOMIC DNA]</scope>
    <source>
        <strain evidence="7">ATCC 50803 / WB clone C6</strain>
    </source>
</reference>
<reference evidence="6" key="2">
    <citation type="submission" date="2019-07" db="EMBL/GenBank/DDBJ databases">
        <title>New Giardia intestinalis WB genome in near-complete chromosomes.</title>
        <authorList>
            <person name="Xu F."/>
            <person name="Jex A."/>
            <person name="Svard S.G."/>
        </authorList>
    </citation>
    <scope>NUCLEOTIDE SEQUENCE [LARGE SCALE GENOMIC DNA]</scope>
    <source>
        <strain evidence="6">ATCC 50803 / WB clone C6</strain>
    </source>
</reference>
<reference key="3">
    <citation type="journal article" date="2019" name="Elife">
        <title>Length-dependent disassembly maintains four different flagellar lengths in Giardia.</title>
        <authorList>
            <person name="McInally S.G."/>
            <person name="Kondev J."/>
            <person name="Dawson S.C."/>
        </authorList>
    </citation>
    <scope>FUNCTION</scope>
    <scope>SUBCELLULAR LOCATION</scope>
    <source>
        <strain evidence="3">ATCC 50803 / WB clone C6</strain>
    </source>
</reference>
<organism evidence="5">
    <name type="scientific">Giardia intestinalis (strain ATCC 50803 / WB clone C6)</name>
    <name type="common">Giardia lamblia</name>
    <dbReference type="NCBI Taxonomy" id="184922"/>
    <lineage>
        <taxon>Eukaryota</taxon>
        <taxon>Metamonada</taxon>
        <taxon>Diplomonadida</taxon>
        <taxon>Hexamitidae</taxon>
        <taxon>Giardiinae</taxon>
        <taxon>Giardia</taxon>
    </lineage>
</organism>
<evidence type="ECO:0000256" key="1">
    <source>
        <dbReference type="SAM" id="MobiDB-lite"/>
    </source>
</evidence>
<evidence type="ECO:0000269" key="2">
    <source>
    </source>
</evidence>
<evidence type="ECO:0000303" key="3">
    <source>
    </source>
</evidence>
<evidence type="ECO:0000305" key="4">
    <source>
    </source>
</evidence>
<evidence type="ECO:0000312" key="5">
    <source>
        <dbReference type="EMBL" id="EDO80778.1"/>
    </source>
</evidence>
<evidence type="ECO:0000312" key="6">
    <source>
        <dbReference type="EMBL" id="KAE8306150.1"/>
    </source>
</evidence>
<evidence type="ECO:0000312" key="7">
    <source>
        <dbReference type="Proteomes" id="UP000001548"/>
    </source>
</evidence>
<gene>
    <name evidence="6" type="ORF">GL50803_0017223</name>
    <name evidence="5" type="ORF">GL50803_17223</name>
</gene>
<keyword id="KW-0966">Cell projection</keyword>
<keyword id="KW-0969">Cilium</keyword>
<keyword id="KW-0970">Cilium biogenesis/degradation</keyword>
<keyword id="KW-0963">Cytoplasm</keyword>
<keyword id="KW-0206">Cytoskeleton</keyword>
<keyword id="KW-0282">Flagellum</keyword>
<keyword id="KW-1185">Reference proteome</keyword>
<comment type="function">
    <text evidence="4">Component of the intraflagellar transport complex B (IFT-B) involved in flagellar assembly (Probable).</text>
</comment>
<comment type="subcellular location">
    <subcellularLocation>
        <location evidence="2">Cell projection</location>
        <location evidence="2">Cilium</location>
        <location evidence="2">Flagellum</location>
    </subcellularLocation>
    <subcellularLocation>
        <location evidence="2">Cytoplasm</location>
        <location evidence="2">Cytoskeleton</location>
        <location evidence="2">Flagellum axoneme</location>
    </subcellularLocation>
    <subcellularLocation>
        <location evidence="2">Cytoplasm</location>
        <location evidence="2">Cytoskeleton</location>
        <location evidence="2">Flagellum basal body</location>
    </subcellularLocation>
    <text evidence="2">Localizes to the cytoplasmic and membrane-bound portions of each of the eight axonemes, localizing particularly at the flagellar pores and at the distal flagellar tips. Localizes to the basal bodies.</text>
</comment>
<proteinExistence type="predicted"/>
<sequence length="1079" mass="115120">MYGISSFYCRDPPNLTCLTWIGIDLAVAASQTDRCLYEIIVPPSLGQVRVSRISDPIPSTIISMTALPPGNGSSASSSTSGPAVMANTASSYQITKGSGSSSTSASQATIVAGCANGTLIFIQADVLGLGCTSQRVSVRRQKSISVSSYVGGEDAIHPVTSLCMMQPRGSSLLVGLETGTVLLLTMMGGLYQFRQILKSNLNAPVHAINSIDRNRAAIAYGGSVTVINITKNNSTELSYKLQSDGDAITALANTGRVLVLGCEHRGAIVLDLLSGLEISVIPPPPYDAVVSVSSQPVASNGFIIATRRGVVIGCRENGTVRSCATLEYDSAHLPVSKIAADGAPATLLSPLADSSMTNVDENLGSSVGGIRDLAFAPYGGSFLCLCLNGLAVGYLAPQRLSSGYITIEVTGLTTVMITDARLQVSEVYTAPEPVISLFLSRFAHTLRLGATTASSVIVWTPPTMAKISSFSLEGGMPLVTKIQWITEPVRSTSYGDMIRPSTVQNQPSTQGLPNRQQQELDFDNLLEKPGDTLQQTESRPLLKSFSQKKLEHDKASNPPIKTAAYVRNPPRYIVLGDSYHLVVDISGEANIVSATTLALVTSIYISSLDSDRQIAIIDSALAYVEGGTTLRIIDPRSGNFILRGVIHHKAVLDLTIGISSQQHIRNASETSAKEGTQGNAVSDFALGSVFSNLTGHQAGKPVDATASTSSLKQTEMSSNDASSYVLALLDTSNSLYVGRLTTSPQAYAKLGNSMSTAILQQSKFLDSIPYSIQFIAQTDLLCMLISESQSLPQALSQIGETVGSDCKLRLVVDACPVRTSIITEDPVFVTPTTIDYSSVQRSNAAVSIFEEDPSRILAAYRMLSRSNIHTIHRITPMVLKNDGLMSNAITMSHAVLGLAGDSSQMVVAVPEFSVLLNYLAKSGNTQRALRLCRFLDQKPLWAQMATYCIEANNIQHLQSALSGLGMVAKASYCHSISSHNEVNAGAVKLAIGDPEGANILSSQGKIGAAILAACDLWNFSKALELCRGNKKYMPLLVYLRTKYHNNLGMSNCNNEEPWLSLSRQYGNVSEDEIHRLMKG</sequence>
<dbReference type="EMBL" id="AACB02000007">
    <property type="protein sequence ID" value="EDO80778.1"/>
    <property type="molecule type" value="Genomic_DNA"/>
</dbReference>
<dbReference type="EMBL" id="AACB03000001">
    <property type="protein sequence ID" value="KAE8306150.1"/>
    <property type="molecule type" value="Genomic_DNA"/>
</dbReference>
<dbReference type="RefSeq" id="XP_001708452.1">
    <property type="nucleotide sequence ID" value="XM_001708400.1"/>
</dbReference>
<dbReference type="STRING" id="184922.A8B9C5"/>
<dbReference type="EnsemblProtists" id="EDO80778">
    <property type="protein sequence ID" value="EDO80778"/>
    <property type="gene ID" value="GL50803_17223"/>
</dbReference>
<dbReference type="GeneID" id="5701375"/>
<dbReference type="KEGG" id="gla:GL50803_0017223"/>
<dbReference type="VEuPathDB" id="GiardiaDB:GL50803_17223"/>
<dbReference type="HOGENOM" id="CLU_286444_0_0_1"/>
<dbReference type="OMA" id="ITEDPVF"/>
<dbReference type="Proteomes" id="UP000001548">
    <property type="component" value="Chromosome 5"/>
</dbReference>
<dbReference type="GO" id="GO:0097729">
    <property type="term" value="C:9+2 motile cilium"/>
    <property type="evidence" value="ECO:0000314"/>
    <property type="project" value="UniProtKB"/>
</dbReference>
<dbReference type="GO" id="GO:0005930">
    <property type="term" value="C:axoneme"/>
    <property type="evidence" value="ECO:0000314"/>
    <property type="project" value="UniProtKB"/>
</dbReference>
<dbReference type="GO" id="GO:0036064">
    <property type="term" value="C:ciliary basal body"/>
    <property type="evidence" value="ECO:0000314"/>
    <property type="project" value="UniProtKB"/>
</dbReference>
<dbReference type="GO" id="GO:1990900">
    <property type="term" value="C:ciliary pocket collar"/>
    <property type="evidence" value="ECO:0000314"/>
    <property type="project" value="UniProtKB"/>
</dbReference>
<dbReference type="GO" id="GO:0097542">
    <property type="term" value="C:ciliary tip"/>
    <property type="evidence" value="ECO:0000314"/>
    <property type="project" value="UniProtKB"/>
</dbReference>
<dbReference type="GO" id="GO:0005929">
    <property type="term" value="C:cilium"/>
    <property type="evidence" value="ECO:0000318"/>
    <property type="project" value="GO_Central"/>
</dbReference>
<dbReference type="GO" id="GO:0030992">
    <property type="term" value="C:intraciliary transport particle B"/>
    <property type="evidence" value="ECO:0000318"/>
    <property type="project" value="GO_Central"/>
</dbReference>
<dbReference type="GO" id="GO:0060271">
    <property type="term" value="P:cilium assembly"/>
    <property type="evidence" value="ECO:0000305"/>
    <property type="project" value="UniProtKB"/>
</dbReference>
<dbReference type="GO" id="GO:0035735">
    <property type="term" value="P:intraciliary transport involved in cilium assembly"/>
    <property type="evidence" value="ECO:0000305"/>
    <property type="project" value="UniProtKB"/>
</dbReference>
<dbReference type="Gene3D" id="2.130.10.10">
    <property type="entry name" value="YVTN repeat-like/Quinoprotein amine dehydrogenase"/>
    <property type="match status" value="1"/>
</dbReference>
<dbReference type="InterPro" id="IPR056157">
    <property type="entry name" value="TPR_IFT80_172_dom"/>
</dbReference>
<dbReference type="InterPro" id="IPR015943">
    <property type="entry name" value="WD40/YVTN_repeat-like_dom_sf"/>
</dbReference>
<dbReference type="InterPro" id="IPR036322">
    <property type="entry name" value="WD40_repeat_dom_sf"/>
</dbReference>
<dbReference type="PANTHER" id="PTHR24098">
    <property type="entry name" value="OUTER SEGMENT 5"/>
    <property type="match status" value="1"/>
</dbReference>
<dbReference type="PANTHER" id="PTHR24098:SF0">
    <property type="entry name" value="OUTER SEGMENT 5"/>
    <property type="match status" value="1"/>
</dbReference>
<dbReference type="Pfam" id="PF23387">
    <property type="entry name" value="TPR_IFT80_172"/>
    <property type="match status" value="1"/>
</dbReference>
<dbReference type="SUPFAM" id="SSF50978">
    <property type="entry name" value="WD40 repeat-like"/>
    <property type="match status" value="1"/>
</dbReference>
<protein>
    <recommendedName>
        <fullName evidence="3">Intraflagellar transport protein 80</fullName>
        <shortName evidence="3">IFT80</shortName>
    </recommendedName>
    <alternativeName>
        <fullName evidence="5">IFT complex B</fullName>
    </alternativeName>
    <alternativeName>
        <fullName evidence="6">Intraflagellar transport protein IFT80</fullName>
    </alternativeName>
</protein>